<comment type="function">
    <text evidence="1">Could be involved in insertion of integral membrane proteins into the membrane.</text>
</comment>
<comment type="subcellular location">
    <subcellularLocation>
        <location evidence="1">Cell inner membrane</location>
        <topology evidence="1">Peripheral membrane protein</topology>
        <orientation evidence="1">Cytoplasmic side</orientation>
    </subcellularLocation>
</comment>
<comment type="similarity">
    <text evidence="1">Belongs to the UPF0161 family.</text>
</comment>
<dbReference type="EMBL" id="CP000435">
    <property type="protein sequence ID" value="ABI47900.1"/>
    <property type="molecule type" value="Genomic_DNA"/>
</dbReference>
<dbReference type="RefSeq" id="WP_011618575.1">
    <property type="nucleotide sequence ID" value="NC_008319.1"/>
</dbReference>
<dbReference type="STRING" id="64471.sync_0630"/>
<dbReference type="KEGG" id="syg:sync_0630"/>
<dbReference type="eggNOG" id="COG0759">
    <property type="taxonomic scope" value="Bacteria"/>
</dbReference>
<dbReference type="HOGENOM" id="CLU_144811_6_1_3"/>
<dbReference type="OrthoDB" id="9801753at2"/>
<dbReference type="Proteomes" id="UP000001961">
    <property type="component" value="Chromosome"/>
</dbReference>
<dbReference type="GO" id="GO:0005886">
    <property type="term" value="C:plasma membrane"/>
    <property type="evidence" value="ECO:0007669"/>
    <property type="project" value="UniProtKB-SubCell"/>
</dbReference>
<dbReference type="HAMAP" id="MF_00386">
    <property type="entry name" value="UPF0161_YidD"/>
    <property type="match status" value="1"/>
</dbReference>
<dbReference type="InterPro" id="IPR002696">
    <property type="entry name" value="Membr_insert_effic_factor_YidD"/>
</dbReference>
<dbReference type="NCBIfam" id="TIGR00278">
    <property type="entry name" value="membrane protein insertion efficiency factor YidD"/>
    <property type="match status" value="1"/>
</dbReference>
<dbReference type="PANTHER" id="PTHR33383">
    <property type="entry name" value="MEMBRANE PROTEIN INSERTION EFFICIENCY FACTOR-RELATED"/>
    <property type="match status" value="1"/>
</dbReference>
<dbReference type="PANTHER" id="PTHR33383:SF1">
    <property type="entry name" value="MEMBRANE PROTEIN INSERTION EFFICIENCY FACTOR-RELATED"/>
    <property type="match status" value="1"/>
</dbReference>
<dbReference type="Pfam" id="PF01809">
    <property type="entry name" value="YidD"/>
    <property type="match status" value="1"/>
</dbReference>
<dbReference type="SMART" id="SM01234">
    <property type="entry name" value="Haemolytic"/>
    <property type="match status" value="1"/>
</dbReference>
<gene>
    <name type="ordered locus">sync_0630</name>
</gene>
<evidence type="ECO:0000255" key="1">
    <source>
        <dbReference type="HAMAP-Rule" id="MF_00386"/>
    </source>
</evidence>
<keyword id="KW-0997">Cell inner membrane</keyword>
<keyword id="KW-1003">Cell membrane</keyword>
<keyword id="KW-0472">Membrane</keyword>
<keyword id="KW-1185">Reference proteome</keyword>
<accession>Q0ICH4</accession>
<proteinExistence type="inferred from homology"/>
<protein>
    <recommendedName>
        <fullName evidence="1">Putative membrane protein insertion efficiency factor</fullName>
    </recommendedName>
</protein>
<reference key="1">
    <citation type="journal article" date="2006" name="Proc. Natl. Acad. Sci. U.S.A.">
        <title>Genome sequence of Synechococcus CC9311: insights into adaptation to a coastal environment.</title>
        <authorList>
            <person name="Palenik B."/>
            <person name="Ren Q."/>
            <person name="Dupont C.L."/>
            <person name="Myers G.S."/>
            <person name="Heidelberg J.F."/>
            <person name="Badger J.H."/>
            <person name="Madupu R."/>
            <person name="Nelson W.C."/>
            <person name="Brinkac L.M."/>
            <person name="Dodson R.J."/>
            <person name="Durkin A.S."/>
            <person name="Daugherty S.C."/>
            <person name="Sullivan S.A."/>
            <person name="Khouri H."/>
            <person name="Mohamoud Y."/>
            <person name="Halpin R."/>
            <person name="Paulsen I.T."/>
        </authorList>
    </citation>
    <scope>NUCLEOTIDE SEQUENCE [LARGE SCALE GENOMIC DNA]</scope>
    <source>
        <strain>CC9311</strain>
    </source>
</reference>
<feature type="chain" id="PRO_1000013138" description="Putative membrane protein insertion efficiency factor">
    <location>
        <begin position="1"/>
        <end position="88"/>
    </location>
</feature>
<name>YIDD_SYNS3</name>
<organism>
    <name type="scientific">Synechococcus sp. (strain CC9311)</name>
    <dbReference type="NCBI Taxonomy" id="64471"/>
    <lineage>
        <taxon>Bacteria</taxon>
        <taxon>Bacillati</taxon>
        <taxon>Cyanobacteriota</taxon>
        <taxon>Cyanophyceae</taxon>
        <taxon>Synechococcales</taxon>
        <taxon>Synechococcaceae</taxon>
        <taxon>Synechococcus</taxon>
    </lineage>
</organism>
<sequence>MHESTILSAGSTNPFNRIVSAVMLALIELYRRWISPLIGPRCRFIPTCSAYGIEAIQRHGPWRGGWLTLRRLLRCHPFTPCGCDPVPD</sequence>